<dbReference type="EMBL" id="AL590842">
    <property type="protein sequence ID" value="CAL22668.1"/>
    <property type="molecule type" value="Genomic_DNA"/>
</dbReference>
<dbReference type="EMBL" id="AE009952">
    <property type="protein sequence ID" value="AAM87656.1"/>
    <property type="molecule type" value="Genomic_DNA"/>
</dbReference>
<dbReference type="EMBL" id="AE017042">
    <property type="protein sequence ID" value="AAS64146.1"/>
    <property type="molecule type" value="Genomic_DNA"/>
</dbReference>
<dbReference type="RefSeq" id="WP_002220736.1">
    <property type="nucleotide sequence ID" value="NZ_WUCM01000028.1"/>
</dbReference>
<dbReference type="RefSeq" id="YP_002348951.1">
    <property type="nucleotide sequence ID" value="NC_003143.1"/>
</dbReference>
<dbReference type="SMR" id="Q8Z9U5"/>
<dbReference type="STRING" id="214092.YPO4100"/>
<dbReference type="PaxDb" id="214092-YPO4100"/>
<dbReference type="DNASU" id="1149061"/>
<dbReference type="EnsemblBacteria" id="AAS64146">
    <property type="protein sequence ID" value="AAS64146"/>
    <property type="gene ID" value="YP_4007"/>
</dbReference>
<dbReference type="GeneID" id="97458397"/>
<dbReference type="KEGG" id="ype:YPO4100"/>
<dbReference type="KEGG" id="ypk:y4114"/>
<dbReference type="KEGG" id="ypm:YP_4007"/>
<dbReference type="PATRIC" id="fig|214092.21.peg.4640"/>
<dbReference type="eggNOG" id="COG0230">
    <property type="taxonomic scope" value="Bacteria"/>
</dbReference>
<dbReference type="HOGENOM" id="CLU_129938_2_1_6"/>
<dbReference type="OrthoDB" id="9804164at2"/>
<dbReference type="Proteomes" id="UP000000815">
    <property type="component" value="Chromosome"/>
</dbReference>
<dbReference type="Proteomes" id="UP000001019">
    <property type="component" value="Chromosome"/>
</dbReference>
<dbReference type="Proteomes" id="UP000002490">
    <property type="component" value="Chromosome"/>
</dbReference>
<dbReference type="GO" id="GO:1990904">
    <property type="term" value="C:ribonucleoprotein complex"/>
    <property type="evidence" value="ECO:0007669"/>
    <property type="project" value="UniProtKB-KW"/>
</dbReference>
<dbReference type="GO" id="GO:0005840">
    <property type="term" value="C:ribosome"/>
    <property type="evidence" value="ECO:0007669"/>
    <property type="project" value="UniProtKB-KW"/>
</dbReference>
<dbReference type="GO" id="GO:0003735">
    <property type="term" value="F:structural constituent of ribosome"/>
    <property type="evidence" value="ECO:0007669"/>
    <property type="project" value="InterPro"/>
</dbReference>
<dbReference type="GO" id="GO:0006412">
    <property type="term" value="P:translation"/>
    <property type="evidence" value="ECO:0007669"/>
    <property type="project" value="UniProtKB-UniRule"/>
</dbReference>
<dbReference type="FunFam" id="1.10.287.3980:FF:000001">
    <property type="entry name" value="Mitochondrial ribosomal protein L34"/>
    <property type="match status" value="1"/>
</dbReference>
<dbReference type="Gene3D" id="1.10.287.3980">
    <property type="match status" value="1"/>
</dbReference>
<dbReference type="HAMAP" id="MF_00391">
    <property type="entry name" value="Ribosomal_bL34"/>
    <property type="match status" value="1"/>
</dbReference>
<dbReference type="InterPro" id="IPR000271">
    <property type="entry name" value="Ribosomal_bL34"/>
</dbReference>
<dbReference type="InterPro" id="IPR020939">
    <property type="entry name" value="Ribosomal_bL34_CS"/>
</dbReference>
<dbReference type="NCBIfam" id="TIGR01030">
    <property type="entry name" value="rpmH_bact"/>
    <property type="match status" value="1"/>
</dbReference>
<dbReference type="PANTHER" id="PTHR14503:SF4">
    <property type="entry name" value="LARGE RIBOSOMAL SUBUNIT PROTEIN BL34M"/>
    <property type="match status" value="1"/>
</dbReference>
<dbReference type="PANTHER" id="PTHR14503">
    <property type="entry name" value="MITOCHONDRIAL RIBOSOMAL PROTEIN 34 FAMILY MEMBER"/>
    <property type="match status" value="1"/>
</dbReference>
<dbReference type="Pfam" id="PF00468">
    <property type="entry name" value="Ribosomal_L34"/>
    <property type="match status" value="1"/>
</dbReference>
<dbReference type="PROSITE" id="PS00784">
    <property type="entry name" value="RIBOSOMAL_L34"/>
    <property type="match status" value="1"/>
</dbReference>
<reference key="1">
    <citation type="journal article" date="2001" name="Nature">
        <title>Genome sequence of Yersinia pestis, the causative agent of plague.</title>
        <authorList>
            <person name="Parkhill J."/>
            <person name="Wren B.W."/>
            <person name="Thomson N.R."/>
            <person name="Titball R.W."/>
            <person name="Holden M.T.G."/>
            <person name="Prentice M.B."/>
            <person name="Sebaihia M."/>
            <person name="James K.D."/>
            <person name="Churcher C.M."/>
            <person name="Mungall K.L."/>
            <person name="Baker S."/>
            <person name="Basham D."/>
            <person name="Bentley S.D."/>
            <person name="Brooks K."/>
            <person name="Cerdeno-Tarraga A.-M."/>
            <person name="Chillingworth T."/>
            <person name="Cronin A."/>
            <person name="Davies R.M."/>
            <person name="Davis P."/>
            <person name="Dougan G."/>
            <person name="Feltwell T."/>
            <person name="Hamlin N."/>
            <person name="Holroyd S."/>
            <person name="Jagels K."/>
            <person name="Karlyshev A.V."/>
            <person name="Leather S."/>
            <person name="Moule S."/>
            <person name="Oyston P.C.F."/>
            <person name="Quail M.A."/>
            <person name="Rutherford K.M."/>
            <person name="Simmonds M."/>
            <person name="Skelton J."/>
            <person name="Stevens K."/>
            <person name="Whitehead S."/>
            <person name="Barrell B.G."/>
        </authorList>
    </citation>
    <scope>NUCLEOTIDE SEQUENCE [LARGE SCALE GENOMIC DNA]</scope>
    <source>
        <strain>CO-92 / Biovar Orientalis</strain>
    </source>
</reference>
<reference key="2">
    <citation type="journal article" date="2002" name="J. Bacteriol.">
        <title>Genome sequence of Yersinia pestis KIM.</title>
        <authorList>
            <person name="Deng W."/>
            <person name="Burland V."/>
            <person name="Plunkett G. III"/>
            <person name="Boutin A."/>
            <person name="Mayhew G.F."/>
            <person name="Liss P."/>
            <person name="Perna N.T."/>
            <person name="Rose D.J."/>
            <person name="Mau B."/>
            <person name="Zhou S."/>
            <person name="Schwartz D.C."/>
            <person name="Fetherston J.D."/>
            <person name="Lindler L.E."/>
            <person name="Brubaker R.R."/>
            <person name="Plano G.V."/>
            <person name="Straley S.C."/>
            <person name="McDonough K.A."/>
            <person name="Nilles M.L."/>
            <person name="Matson J.S."/>
            <person name="Blattner F.R."/>
            <person name="Perry R.D."/>
        </authorList>
    </citation>
    <scope>NUCLEOTIDE SEQUENCE [LARGE SCALE GENOMIC DNA]</scope>
    <source>
        <strain>KIM10+ / Biovar Mediaevalis</strain>
    </source>
</reference>
<reference key="3">
    <citation type="journal article" date="2004" name="DNA Res.">
        <title>Complete genome sequence of Yersinia pestis strain 91001, an isolate avirulent to humans.</title>
        <authorList>
            <person name="Song Y."/>
            <person name="Tong Z."/>
            <person name="Wang J."/>
            <person name="Wang L."/>
            <person name="Guo Z."/>
            <person name="Han Y."/>
            <person name="Zhang J."/>
            <person name="Pei D."/>
            <person name="Zhou D."/>
            <person name="Qin H."/>
            <person name="Pang X."/>
            <person name="Han Y."/>
            <person name="Zhai J."/>
            <person name="Li M."/>
            <person name="Cui B."/>
            <person name="Qi Z."/>
            <person name="Jin L."/>
            <person name="Dai R."/>
            <person name="Chen F."/>
            <person name="Li S."/>
            <person name="Ye C."/>
            <person name="Du Z."/>
            <person name="Lin W."/>
            <person name="Wang J."/>
            <person name="Yu J."/>
            <person name="Yang H."/>
            <person name="Wang J."/>
            <person name="Huang P."/>
            <person name="Yang R."/>
        </authorList>
    </citation>
    <scope>NUCLEOTIDE SEQUENCE [LARGE SCALE GENOMIC DNA]</scope>
    <source>
        <strain>91001 / Biovar Mediaevalis</strain>
    </source>
</reference>
<comment type="similarity">
    <text evidence="1">Belongs to the bacterial ribosomal protein bL34 family.</text>
</comment>
<gene>
    <name evidence="1" type="primary">rpmH</name>
    <name type="ordered locus">YPO4100</name>
    <name type="ordered locus">y4114</name>
    <name type="ordered locus">YP_4007</name>
</gene>
<protein>
    <recommendedName>
        <fullName evidence="1">Large ribosomal subunit protein bL34</fullName>
    </recommendedName>
    <alternativeName>
        <fullName evidence="3">50S ribosomal protein L34</fullName>
    </alternativeName>
</protein>
<accession>Q8Z9U5</accession>
<accession>Q0W9T7</accession>
<evidence type="ECO:0000255" key="1">
    <source>
        <dbReference type="HAMAP-Rule" id="MF_00391"/>
    </source>
</evidence>
<evidence type="ECO:0000256" key="2">
    <source>
        <dbReference type="SAM" id="MobiDB-lite"/>
    </source>
</evidence>
<evidence type="ECO:0000305" key="3"/>
<keyword id="KW-1185">Reference proteome</keyword>
<keyword id="KW-0687">Ribonucleoprotein</keyword>
<keyword id="KW-0689">Ribosomal protein</keyword>
<proteinExistence type="inferred from homology"/>
<organism>
    <name type="scientific">Yersinia pestis</name>
    <dbReference type="NCBI Taxonomy" id="632"/>
    <lineage>
        <taxon>Bacteria</taxon>
        <taxon>Pseudomonadati</taxon>
        <taxon>Pseudomonadota</taxon>
        <taxon>Gammaproteobacteria</taxon>
        <taxon>Enterobacterales</taxon>
        <taxon>Yersiniaceae</taxon>
        <taxon>Yersinia</taxon>
    </lineage>
</organism>
<sequence>MKRTFQPSVLKRNRSHGFRARMATKNGRQVLARRRAKSRSRLTVSK</sequence>
<name>RL34_YERPE</name>
<feature type="chain" id="PRO_0000187511" description="Large ribosomal subunit protein bL34">
    <location>
        <begin position="1"/>
        <end position="46"/>
    </location>
</feature>
<feature type="region of interest" description="Disordered" evidence="2">
    <location>
        <begin position="26"/>
        <end position="46"/>
    </location>
</feature>
<feature type="compositionally biased region" description="Basic residues" evidence="2">
    <location>
        <begin position="31"/>
        <end position="40"/>
    </location>
</feature>